<keyword id="KW-1185">Reference proteome</keyword>
<reference key="1">
    <citation type="journal article" date="2001" name="Nature">
        <title>Genome sequence of enterohaemorrhagic Escherichia coli O157:H7.</title>
        <authorList>
            <person name="Perna N.T."/>
            <person name="Plunkett G. III"/>
            <person name="Burland V."/>
            <person name="Mau B."/>
            <person name="Glasner J.D."/>
            <person name="Rose D.J."/>
            <person name="Mayhew G.F."/>
            <person name="Evans P.S."/>
            <person name="Gregor J."/>
            <person name="Kirkpatrick H.A."/>
            <person name="Posfai G."/>
            <person name="Hackett J."/>
            <person name="Klink S."/>
            <person name="Boutin A."/>
            <person name="Shao Y."/>
            <person name="Miller L."/>
            <person name="Grotbeck E.J."/>
            <person name="Davis N.W."/>
            <person name="Lim A."/>
            <person name="Dimalanta E.T."/>
            <person name="Potamousis K."/>
            <person name="Apodaca J."/>
            <person name="Anantharaman T.S."/>
            <person name="Lin J."/>
            <person name="Yen G."/>
            <person name="Schwartz D.C."/>
            <person name="Welch R.A."/>
            <person name="Blattner F.R."/>
        </authorList>
    </citation>
    <scope>NUCLEOTIDE SEQUENCE [LARGE SCALE GENOMIC DNA]</scope>
    <source>
        <strain>O157:H7 / EDL933 / ATCC 700927 / EHEC</strain>
    </source>
</reference>
<reference key="2">
    <citation type="journal article" date="2001" name="DNA Res.">
        <title>Complete genome sequence of enterohemorrhagic Escherichia coli O157:H7 and genomic comparison with a laboratory strain K-12.</title>
        <authorList>
            <person name="Hayashi T."/>
            <person name="Makino K."/>
            <person name="Ohnishi M."/>
            <person name="Kurokawa K."/>
            <person name="Ishii K."/>
            <person name="Yokoyama K."/>
            <person name="Han C.-G."/>
            <person name="Ohtsubo E."/>
            <person name="Nakayama K."/>
            <person name="Murata T."/>
            <person name="Tanaka M."/>
            <person name="Tobe T."/>
            <person name="Iida T."/>
            <person name="Takami H."/>
            <person name="Honda T."/>
            <person name="Sasakawa C."/>
            <person name="Ogasawara N."/>
            <person name="Yasunaga T."/>
            <person name="Kuhara S."/>
            <person name="Shiba T."/>
            <person name="Hattori M."/>
            <person name="Shinagawa H."/>
        </authorList>
    </citation>
    <scope>NUCLEOTIDE SEQUENCE [LARGE SCALE GENOMIC DNA]</scope>
    <source>
        <strain>O157:H7 / Sakai / RIMD 0509952 / EHEC</strain>
    </source>
</reference>
<proteinExistence type="predicted"/>
<sequence length="64" mass="6959">MMTLEADSVNVQALDMGHIVVDIDGVNITELINKAAENGYSLRVVDDRDSTETPATYASPHQLL</sequence>
<protein>
    <recommendedName>
        <fullName>Uncharacterized protein YeeW</fullName>
    </recommendedName>
</protein>
<feature type="chain" id="PRO_0000169119" description="Uncharacterized protein YeeW">
    <location>
        <begin position="1"/>
        <end position="64"/>
    </location>
</feature>
<organism>
    <name type="scientific">Escherichia coli O157:H7</name>
    <dbReference type="NCBI Taxonomy" id="83334"/>
    <lineage>
        <taxon>Bacteria</taxon>
        <taxon>Pseudomonadati</taxon>
        <taxon>Pseudomonadota</taxon>
        <taxon>Gammaproteobacteria</taxon>
        <taxon>Enterobacterales</taxon>
        <taxon>Enterobacteriaceae</taxon>
        <taxon>Escherichia</taxon>
    </lineage>
</organism>
<gene>
    <name type="primary">yeeW</name>
    <name type="ordered locus">Z3166</name>
    <name type="ordered locus">ECs2807</name>
</gene>
<name>YEEW_ECO57</name>
<accession>P64527</accession>
<accession>P76366</accession>
<accession>Q8X8U5</accession>
<dbReference type="EMBL" id="AE005174">
    <property type="protein sequence ID" value="AAG57064.1"/>
    <property type="molecule type" value="Genomic_DNA"/>
</dbReference>
<dbReference type="EMBL" id="BA000007">
    <property type="protein sequence ID" value="BAB36230.2"/>
    <property type="molecule type" value="Genomic_DNA"/>
</dbReference>
<dbReference type="PIR" id="D85825">
    <property type="entry name" value="D85825"/>
</dbReference>
<dbReference type="PIR" id="G90979">
    <property type="entry name" value="G90979"/>
</dbReference>
<dbReference type="RefSeq" id="NP_310834.1">
    <property type="nucleotide sequence ID" value="NC_002695.1"/>
</dbReference>
<dbReference type="RefSeq" id="WP_000988600.1">
    <property type="nucleotide sequence ID" value="NZ_VOAI01000013.1"/>
</dbReference>
<dbReference type="GeneID" id="913930"/>
<dbReference type="KEGG" id="ece:Z3166"/>
<dbReference type="KEGG" id="ecs:ECs_2807"/>
<dbReference type="PATRIC" id="fig|386585.9.peg.2942"/>
<dbReference type="HOGENOM" id="CLU_114884_2_0_6"/>
<dbReference type="Proteomes" id="UP000000558">
    <property type="component" value="Chromosome"/>
</dbReference>
<dbReference type="Proteomes" id="UP000002519">
    <property type="component" value="Chromosome"/>
</dbReference>
<dbReference type="InterPro" id="IPR046025">
    <property type="entry name" value="DUF5983"/>
</dbReference>
<dbReference type="Pfam" id="PF19419">
    <property type="entry name" value="DUF5983"/>
    <property type="match status" value="1"/>
</dbReference>